<keyword id="KW-0963">Cytoplasm</keyword>
<keyword id="KW-1185">Reference proteome</keyword>
<keyword id="KW-0677">Repeat</keyword>
<keyword id="KW-0802">TPR repeat</keyword>
<name>CLU_ASPTN</name>
<accession>Q0CNX5</accession>
<protein>
    <recommendedName>
        <fullName evidence="1">Clustered mitochondria protein homolog</fullName>
    </recommendedName>
    <alternativeName>
        <fullName evidence="1">Protein TIF31 homolog</fullName>
    </alternativeName>
</protein>
<organism>
    <name type="scientific">Aspergillus terreus (strain NIH 2624 / FGSC A1156)</name>
    <dbReference type="NCBI Taxonomy" id="341663"/>
    <lineage>
        <taxon>Eukaryota</taxon>
        <taxon>Fungi</taxon>
        <taxon>Dikarya</taxon>
        <taxon>Ascomycota</taxon>
        <taxon>Pezizomycotina</taxon>
        <taxon>Eurotiomycetes</taxon>
        <taxon>Eurotiomycetidae</taxon>
        <taxon>Eurotiales</taxon>
        <taxon>Aspergillaceae</taxon>
        <taxon>Aspergillus</taxon>
        <taxon>Aspergillus subgen. Circumdati</taxon>
    </lineage>
</organism>
<reference key="1">
    <citation type="submission" date="2005-09" db="EMBL/GenBank/DDBJ databases">
        <title>Annotation of the Aspergillus terreus NIH2624 genome.</title>
        <authorList>
            <person name="Birren B.W."/>
            <person name="Lander E.S."/>
            <person name="Galagan J.E."/>
            <person name="Nusbaum C."/>
            <person name="Devon K."/>
            <person name="Henn M."/>
            <person name="Ma L.-J."/>
            <person name="Jaffe D.B."/>
            <person name="Butler J."/>
            <person name="Alvarez P."/>
            <person name="Gnerre S."/>
            <person name="Grabherr M."/>
            <person name="Kleber M."/>
            <person name="Mauceli E.W."/>
            <person name="Brockman W."/>
            <person name="Rounsley S."/>
            <person name="Young S.K."/>
            <person name="LaButti K."/>
            <person name="Pushparaj V."/>
            <person name="DeCaprio D."/>
            <person name="Crawford M."/>
            <person name="Koehrsen M."/>
            <person name="Engels R."/>
            <person name="Montgomery P."/>
            <person name="Pearson M."/>
            <person name="Howarth C."/>
            <person name="Larson L."/>
            <person name="Luoma S."/>
            <person name="White J."/>
            <person name="Alvarado L."/>
            <person name="Kodira C.D."/>
            <person name="Zeng Q."/>
            <person name="Oleary S."/>
            <person name="Yandava C."/>
            <person name="Denning D.W."/>
            <person name="Nierman W.C."/>
            <person name="Milne T."/>
            <person name="Madden K."/>
        </authorList>
    </citation>
    <scope>NUCLEOTIDE SEQUENCE [LARGE SCALE GENOMIC DNA]</scope>
    <source>
        <strain>NIH 2624 / FGSC A1156</strain>
    </source>
</reference>
<proteinExistence type="inferred from homology"/>
<evidence type="ECO:0000255" key="1">
    <source>
        <dbReference type="HAMAP-Rule" id="MF_03013"/>
    </source>
</evidence>
<evidence type="ECO:0000255" key="2">
    <source>
        <dbReference type="PROSITE-ProRule" id="PRU01167"/>
    </source>
</evidence>
<evidence type="ECO:0000256" key="3">
    <source>
        <dbReference type="SAM" id="MobiDB-lite"/>
    </source>
</evidence>
<sequence>MAQTNGELEHSKGMSSPAVRISQAQKSTKLTVDPESPEQVANGTHAEGEQPEENAGGLFQISVKLPHEPYKIQVMVSSQEQVQDVRQSIVELPSTFQYTCFHLEFNGKRINDFVELSEVPDLKADSEIVLVEDPYTEKEARMHVVRMRELVGAAGDRVDNIQGVNAGLSLHDAIAAEAAAGEASEKEHSLSKYEIAGSSSLKTILPRPETPLPKTVKSIALSPWNPAPYHLRQKGHLLYLQVTTNEGEQFQITSHVSGFYVNKCSNAKFDPFPKTIPKKRSAHSLLTLISQLSPSFNSSFEALQEANNQKDLLTTFPFQNAIPNNPWLVPAPSSNVNAHQPDITRSQENYLISGVDNAETLRDWNEEFQTTRELPRETVQDRVFRERLTSKLFADYNEAAARGAVLVARGEVAPLNPTEERDAQIFVYNNIFYSFGADGVGTFASEGGDEAARVAVGKDVLGIKAVNQLDINGLFTPGTIVVDYLGKRIVGQSIVPGIFKQREPGENQIDYGGVEGKDVVATHPDFVPVFEKLSKALRIKKHPVWDKEGKRHDLEGSVETKGLLGTDGRKYVLDLYRVTPLDVMWQEEEGSDVYPHRMSILRLELVESYWRHKMSQYVKAEVERRRVAKEAAKKEQSETAEPKEEGAEEKSEEALDQERVDISGFSLALNPDVCSGQVPQTAEEKEQWAQDEKEVRDTCDFLRSKVMPELVQDLHDGDVGFPMDGQSLSQLLHKRGINIRYLGKLAQMSKEKGARLDALTTLLVQEMIARAFKHIANNYLRNVPAPFVASCLAHLLNCLLGADVNANPRAEIDSSLREVYPEGDFSFEKATPASLRADIEKQVTIRYRFSLDAEWYNSLRHLQLLRDIAIKLGIQLGARDFVFAKADLPKTPVSNGVNGAGHDDSNSNKKKKKKGGDSNSPARAAVEDKPALSIVVDDIVNVVPLVKDASPRSSLAEEALEAGRISLMQNQKQLGQELILESLSLHEQIYGILHPEVAKLYHQLSMLYYQTDEKEAAVELARKAVIVTERTLGVDSADTILSYLNLSLFEHASGNTKTALVYIKHAMDLWKIIYGPNHPDSITTMNNAAVMLQHLKQYSDSRKWFEASLVVCESLFGRQSINTATILFQLAQALALDQDSKGAVGKMRDAYNIFLQQLGPNDRNTKEAETWLEQLTQNAVSIAKHAKDIQARRLRRINMTPRTLGTRVQPQVGQTAPESAGAKDASNTSLDSRSIDELLKFIEGGDTTSASRSKQKKRAAASNPKLRGSKKSSA</sequence>
<dbReference type="EMBL" id="CH476599">
    <property type="protein sequence ID" value="EAU35056.1"/>
    <property type="molecule type" value="Genomic_DNA"/>
</dbReference>
<dbReference type="RefSeq" id="XP_001213787.1">
    <property type="nucleotide sequence ID" value="XM_001213787.1"/>
</dbReference>
<dbReference type="SMR" id="Q0CNX5"/>
<dbReference type="STRING" id="341663.Q0CNX5"/>
<dbReference type="EnsemblFungi" id="EAU35056">
    <property type="protein sequence ID" value="EAU35056"/>
    <property type="gene ID" value="ATEG_04609"/>
</dbReference>
<dbReference type="GeneID" id="4320025"/>
<dbReference type="VEuPathDB" id="FungiDB:ATEG_04609"/>
<dbReference type="eggNOG" id="KOG1839">
    <property type="taxonomic scope" value="Eukaryota"/>
</dbReference>
<dbReference type="HOGENOM" id="CLU_003256_2_0_1"/>
<dbReference type="OMA" id="HPVWDKD"/>
<dbReference type="OrthoDB" id="1414216at2759"/>
<dbReference type="Proteomes" id="UP000007963">
    <property type="component" value="Unassembled WGS sequence"/>
</dbReference>
<dbReference type="GO" id="GO:0005737">
    <property type="term" value="C:cytoplasm"/>
    <property type="evidence" value="ECO:0007669"/>
    <property type="project" value="UniProtKB-SubCell"/>
</dbReference>
<dbReference type="GO" id="GO:0003729">
    <property type="term" value="F:mRNA binding"/>
    <property type="evidence" value="ECO:0007669"/>
    <property type="project" value="TreeGrafter"/>
</dbReference>
<dbReference type="GO" id="GO:0048312">
    <property type="term" value="P:intracellular distribution of mitochondria"/>
    <property type="evidence" value="ECO:0007669"/>
    <property type="project" value="TreeGrafter"/>
</dbReference>
<dbReference type="GO" id="GO:0007005">
    <property type="term" value="P:mitochondrion organization"/>
    <property type="evidence" value="ECO:0007669"/>
    <property type="project" value="UniProtKB-UniRule"/>
</dbReference>
<dbReference type="CDD" id="cd15466">
    <property type="entry name" value="CLU-central"/>
    <property type="match status" value="1"/>
</dbReference>
<dbReference type="FunFam" id="1.25.40.10:FF:000293">
    <property type="entry name" value="Clustered mitochondria protein homolog"/>
    <property type="match status" value="1"/>
</dbReference>
<dbReference type="FunFam" id="1.25.40.10:FF:000532">
    <property type="entry name" value="Clustered mitochondria protein homolog"/>
    <property type="match status" value="1"/>
</dbReference>
<dbReference type="FunFam" id="3.30.2280.10:FF:000002">
    <property type="entry name" value="Clustered mitochondria protein homolog"/>
    <property type="match status" value="1"/>
</dbReference>
<dbReference type="Gene3D" id="3.30.2280.10">
    <property type="entry name" value="Hypothetical protein (hspc210)"/>
    <property type="match status" value="1"/>
</dbReference>
<dbReference type="Gene3D" id="1.25.40.10">
    <property type="entry name" value="Tetratricopeptide repeat domain"/>
    <property type="match status" value="2"/>
</dbReference>
<dbReference type="HAMAP" id="MF_03013">
    <property type="entry name" value="CLU"/>
    <property type="match status" value="1"/>
</dbReference>
<dbReference type="InterPro" id="IPR033646">
    <property type="entry name" value="CLU-central"/>
</dbReference>
<dbReference type="InterPro" id="IPR025697">
    <property type="entry name" value="CLU_dom"/>
</dbReference>
<dbReference type="InterPro" id="IPR028275">
    <property type="entry name" value="CLU_N"/>
</dbReference>
<dbReference type="InterPro" id="IPR027523">
    <property type="entry name" value="CLU_prot"/>
</dbReference>
<dbReference type="InterPro" id="IPR023231">
    <property type="entry name" value="GSKIP_dom_sf"/>
</dbReference>
<dbReference type="InterPro" id="IPR011990">
    <property type="entry name" value="TPR-like_helical_dom_sf"/>
</dbReference>
<dbReference type="InterPro" id="IPR019734">
    <property type="entry name" value="TPR_rpt"/>
</dbReference>
<dbReference type="PANTHER" id="PTHR12601:SF6">
    <property type="entry name" value="CLUSTERED MITOCHONDRIA PROTEIN HOMOLOG"/>
    <property type="match status" value="1"/>
</dbReference>
<dbReference type="PANTHER" id="PTHR12601">
    <property type="entry name" value="EUKARYOTIC TRANSLATION INITIATION FACTOR 3 SUBUNIT EIF-3"/>
    <property type="match status" value="1"/>
</dbReference>
<dbReference type="Pfam" id="PF13236">
    <property type="entry name" value="CLU"/>
    <property type="match status" value="1"/>
</dbReference>
<dbReference type="Pfam" id="PF15044">
    <property type="entry name" value="CLU_N"/>
    <property type="match status" value="1"/>
</dbReference>
<dbReference type="Pfam" id="PF12807">
    <property type="entry name" value="eIF3_p135"/>
    <property type="match status" value="1"/>
</dbReference>
<dbReference type="Pfam" id="PF13374">
    <property type="entry name" value="TPR_10"/>
    <property type="match status" value="2"/>
</dbReference>
<dbReference type="Pfam" id="PF13424">
    <property type="entry name" value="TPR_12"/>
    <property type="match status" value="1"/>
</dbReference>
<dbReference type="SUPFAM" id="SSF103107">
    <property type="entry name" value="Hypothetical protein c14orf129, hspc210"/>
    <property type="match status" value="1"/>
</dbReference>
<dbReference type="SUPFAM" id="SSF48452">
    <property type="entry name" value="TPR-like"/>
    <property type="match status" value="2"/>
</dbReference>
<dbReference type="PROSITE" id="PS51823">
    <property type="entry name" value="CLU"/>
    <property type="match status" value="1"/>
</dbReference>
<dbReference type="PROSITE" id="PS50005">
    <property type="entry name" value="TPR"/>
    <property type="match status" value="1"/>
</dbReference>
<comment type="function">
    <text evidence="1">mRNA-binding protein involved in proper cytoplasmic distribution of mitochondria.</text>
</comment>
<comment type="subunit">
    <text evidence="1">May associate with the eukaryotic translation initiation factor 3 (eIF-3) complex.</text>
</comment>
<comment type="subcellular location">
    <subcellularLocation>
        <location evidence="1">Cytoplasm</location>
    </subcellularLocation>
</comment>
<comment type="similarity">
    <text evidence="1">Belongs to the CLU family.</text>
</comment>
<feature type="chain" id="PRO_0000366398" description="Clustered mitochondria protein homolog">
    <location>
        <begin position="1"/>
        <end position="1274"/>
    </location>
</feature>
<feature type="repeat" description="TPR 1">
    <location>
        <begin position="293"/>
        <end position="326"/>
    </location>
</feature>
<feature type="domain" description="Clu" evidence="2">
    <location>
        <begin position="342"/>
        <end position="586"/>
    </location>
</feature>
<feature type="repeat" description="TPR 2">
    <location>
        <begin position="510"/>
        <end position="543"/>
    </location>
</feature>
<feature type="repeat" description="TPR 3">
    <location>
        <begin position="628"/>
        <end position="661"/>
    </location>
</feature>
<feature type="repeat" description="TPR 4">
    <location>
        <begin position="998"/>
        <end position="1031"/>
    </location>
</feature>
<feature type="repeat" description="TPR 5">
    <location>
        <begin position="1040"/>
        <end position="1073"/>
    </location>
</feature>
<feature type="repeat" description="TPR 6">
    <location>
        <begin position="1082"/>
        <end position="1115"/>
    </location>
</feature>
<feature type="repeat" description="TPR 7">
    <location>
        <begin position="1124"/>
        <end position="1157"/>
    </location>
</feature>
<feature type="region of interest" description="Disordered" evidence="3">
    <location>
        <begin position="1"/>
        <end position="53"/>
    </location>
</feature>
<feature type="region of interest" description="Disordered" evidence="3">
    <location>
        <begin position="631"/>
        <end position="655"/>
    </location>
</feature>
<feature type="region of interest" description="Disordered" evidence="3">
    <location>
        <begin position="893"/>
        <end position="925"/>
    </location>
</feature>
<feature type="region of interest" description="Disordered" evidence="3">
    <location>
        <begin position="1197"/>
        <end position="1274"/>
    </location>
</feature>
<feature type="compositionally biased region" description="Polar residues" evidence="3">
    <location>
        <begin position="1200"/>
        <end position="1217"/>
    </location>
</feature>
<gene>
    <name evidence="1" type="primary">clu1</name>
    <name type="synonym">tif31</name>
    <name type="ORF">ATEG_04609</name>
</gene>